<organism>
    <name type="scientific">Zea mays</name>
    <name type="common">Maize</name>
    <dbReference type="NCBI Taxonomy" id="4577"/>
    <lineage>
        <taxon>Eukaryota</taxon>
        <taxon>Viridiplantae</taxon>
        <taxon>Streptophyta</taxon>
        <taxon>Embryophyta</taxon>
        <taxon>Tracheophyta</taxon>
        <taxon>Spermatophyta</taxon>
        <taxon>Magnoliopsida</taxon>
        <taxon>Liliopsida</taxon>
        <taxon>Poales</taxon>
        <taxon>Poaceae</taxon>
        <taxon>PACMAD clade</taxon>
        <taxon>Panicoideae</taxon>
        <taxon>Andropogonodae</taxon>
        <taxon>Andropogoneae</taxon>
        <taxon>Tripsacinae</taxon>
        <taxon>Zea</taxon>
    </lineage>
</organism>
<comment type="miscellaneous">
    <text>On the 2D-gel the determined pI of this unknown protein is: 6.1, its MW is: 50.3 kDa.</text>
</comment>
<proteinExistence type="evidence at protein level"/>
<feature type="chain" id="PRO_0000055514" description="Unknown protein from spot 263 of 2D-PAGE of etiolated coleoptile">
    <location>
        <begin position="1" status="less than"/>
        <end position="14" status="greater than"/>
    </location>
</feature>
<feature type="non-terminal residue">
    <location>
        <position position="1"/>
    </location>
</feature>
<feature type="non-terminal residue">
    <location>
        <position position="14"/>
    </location>
</feature>
<name>UC18_MAIZE</name>
<reference key="1">
    <citation type="journal article" date="1996" name="Theor. Appl. Genet.">
        <title>The maize two dimensional gel protein database: towards an integrated genome analysis program.</title>
        <authorList>
            <person name="Touzet P."/>
            <person name="Riccardi F."/>
            <person name="Morin C."/>
            <person name="Damerval C."/>
            <person name="Huet J.-C."/>
            <person name="Pernollet J.-C."/>
            <person name="Zivy M."/>
            <person name="de Vienne D."/>
        </authorList>
        <dbReference type="AGRICOLA" id="IND20551642"/>
    </citation>
    <scope>PROTEIN SEQUENCE</scope>
    <source>
        <tissue>Coleoptile</tissue>
    </source>
</reference>
<dbReference type="MaizeGDB" id="123950"/>
<dbReference type="InParanoid" id="P80624"/>
<dbReference type="Proteomes" id="UP000007305">
    <property type="component" value="Unplaced"/>
</dbReference>
<accession>P80624</accession>
<protein>
    <recommendedName>
        <fullName>Unknown protein from spot 263 of 2D-PAGE of etiolated coleoptile</fullName>
    </recommendedName>
</protein>
<keyword id="KW-0903">Direct protein sequencing</keyword>
<keyword id="KW-1185">Reference proteome</keyword>
<sequence length="14" mass="1485">DVHSNTGIFGIHTS</sequence>